<keyword id="KW-0963">Cytoplasm</keyword>
<keyword id="KW-0344">Guanine-nucleotide releasing factor</keyword>
<keyword id="KW-0597">Phosphoprotein</keyword>
<keyword id="KW-1185">Reference proteome</keyword>
<comment type="function">
    <text evidence="1">Acts as a guanine nucleotide exchange factor (GEF) for RhoA and RhoB GTPases.</text>
</comment>
<comment type="subunit">
    <text evidence="1">Interacts with RHOA and RHOB.</text>
</comment>
<comment type="subcellular location">
    <subcellularLocation>
        <location evidence="1">Cytoplasm</location>
    </subcellularLocation>
</comment>
<protein>
    <recommendedName>
        <fullName>Rho guanine nucleotide exchange factor 3</fullName>
    </recommendedName>
</protein>
<reference key="1">
    <citation type="submission" date="2000-07" db="EMBL/GenBank/DDBJ databases">
        <title>Isolation of full-length cDNA clones from macaque brain cDNA libraries.</title>
        <authorList>
            <person name="Osada N."/>
            <person name="Hida M."/>
            <person name="Kusuda J."/>
            <person name="Tanuma R."/>
            <person name="Iseki K."/>
            <person name="Hirai M."/>
            <person name="Terao K."/>
            <person name="Suzuki Y."/>
            <person name="Sugano S."/>
            <person name="Hashimoto K."/>
        </authorList>
    </citation>
    <scope>NUCLEOTIDE SEQUENCE [LARGE SCALE MRNA]</scope>
    <source>
        <tissue>Brain cortex</tissue>
    </source>
</reference>
<sequence>MVAKDYPFYLTVKRANCSLELPPASGPAKDAEEPSNKRVKPLSRVTSLANLIPPVKATPLKRFSQTLQRSISFRSESRPDILAPRPWSRNAAPSSTKRRDSKLWSETFDVCVNQMLTSKEIKRQEAIFELSQGEEDLIEDLKLAKKAYHDPMLKLSIMTEQELNQIFGTLDSLIPLHEELLSQLRDVRKPDGSTEHVGPILVGWLPCLSSYDSYCSNQVAAKALLDHKKQDHRVQDFLQRCLESPFSRKLDLWNFLDIPRSRLVKYPLLLREILRHTPNDNPDQQHLEEAINIIQGIVAEINTKTGESECRYYKERLLYLEEGQKDSLIDSSRVLCCHGELKNNRGVKLHVFLFQEVLVITRAVTHNEQLCYQLYRQPIPVKDLLLEDLQDGEVRLGGSLRGAFSNNERIKNFFRVSFKNGSQSQTHSLQANDTFNKQQWLNCIRQAKETVLCAAGQAGVLDSEGSFLNPTTGSRELQGETKLEQMDQSDSESDCSMDTSEVSLDCEHMEQTDSSCGNSRHGESNV</sequence>
<evidence type="ECO:0000250" key="1"/>
<evidence type="ECO:0000250" key="2">
    <source>
        <dbReference type="UniProtKB" id="Q7Z628"/>
    </source>
</evidence>
<evidence type="ECO:0000250" key="3">
    <source>
        <dbReference type="UniProtKB" id="Q9NR81"/>
    </source>
</evidence>
<evidence type="ECO:0000255" key="4">
    <source>
        <dbReference type="PROSITE-ProRule" id="PRU00062"/>
    </source>
</evidence>
<evidence type="ECO:0000255" key="5">
    <source>
        <dbReference type="PROSITE-ProRule" id="PRU00145"/>
    </source>
</evidence>
<evidence type="ECO:0000256" key="6">
    <source>
        <dbReference type="SAM" id="MobiDB-lite"/>
    </source>
</evidence>
<dbReference type="EMBL" id="AB046022">
    <property type="protein sequence ID" value="BAB01604.1"/>
    <property type="molecule type" value="mRNA"/>
</dbReference>
<dbReference type="RefSeq" id="XP_005547498.1">
    <property type="nucleotide sequence ID" value="XM_005547441.4"/>
</dbReference>
<dbReference type="SMR" id="Q9N0A8"/>
<dbReference type="STRING" id="9541.ENSMFAP00000013925"/>
<dbReference type="Ensembl" id="ENSMFAT00000064324.2">
    <property type="protein sequence ID" value="ENSMFAP00000013872.1"/>
    <property type="gene ID" value="ENSMFAG00000029926.2"/>
</dbReference>
<dbReference type="GeneID" id="102122608"/>
<dbReference type="KEGG" id="mcf:102122608"/>
<dbReference type="CTD" id="50650"/>
<dbReference type="VEuPathDB" id="HostDB:ENSMFAG00000029926"/>
<dbReference type="eggNOG" id="KOG4305">
    <property type="taxonomic scope" value="Eukaryota"/>
</dbReference>
<dbReference type="GeneTree" id="ENSGT00940000158385"/>
<dbReference type="OMA" id="QCVFREM"/>
<dbReference type="Proteomes" id="UP000233100">
    <property type="component" value="Chromosome 2"/>
</dbReference>
<dbReference type="Bgee" id="ENSMFAG00000029926">
    <property type="expression patterns" value="Expressed in pituitary gland and 13 other cell types or tissues"/>
</dbReference>
<dbReference type="GO" id="GO:0005829">
    <property type="term" value="C:cytosol"/>
    <property type="evidence" value="ECO:0007669"/>
    <property type="project" value="UniProtKB-ARBA"/>
</dbReference>
<dbReference type="GO" id="GO:0005085">
    <property type="term" value="F:guanyl-nucleotide exchange factor activity"/>
    <property type="evidence" value="ECO:0007669"/>
    <property type="project" value="UniProtKB-KW"/>
</dbReference>
<dbReference type="GO" id="GO:0035556">
    <property type="term" value="P:intracellular signal transduction"/>
    <property type="evidence" value="ECO:0007669"/>
    <property type="project" value="InterPro"/>
</dbReference>
<dbReference type="GO" id="GO:0035025">
    <property type="term" value="P:positive regulation of Rho protein signal transduction"/>
    <property type="evidence" value="ECO:0007669"/>
    <property type="project" value="TreeGrafter"/>
</dbReference>
<dbReference type="CDD" id="cd10572">
    <property type="entry name" value="PH_RhoGEF3_XPLN"/>
    <property type="match status" value="1"/>
</dbReference>
<dbReference type="CDD" id="cd00160">
    <property type="entry name" value="RhoGEF"/>
    <property type="match status" value="1"/>
</dbReference>
<dbReference type="FunFam" id="2.30.29.30:FF:000151">
    <property type="entry name" value="Rho guanine nucleotide exchange factor 3"/>
    <property type="match status" value="1"/>
</dbReference>
<dbReference type="FunFam" id="1.20.900.10:FF:000010">
    <property type="entry name" value="Rho guanine nucleotide exchange factor 3 isoform 1"/>
    <property type="match status" value="1"/>
</dbReference>
<dbReference type="Gene3D" id="1.20.900.10">
    <property type="entry name" value="Dbl homology (DH) domain"/>
    <property type="match status" value="1"/>
</dbReference>
<dbReference type="Gene3D" id="2.30.29.30">
    <property type="entry name" value="Pleckstrin-homology domain (PH domain)/Phosphotyrosine-binding domain (PTB)"/>
    <property type="match status" value="1"/>
</dbReference>
<dbReference type="InterPro" id="IPR035899">
    <property type="entry name" value="DBL_dom_sf"/>
</dbReference>
<dbReference type="InterPro" id="IPR000219">
    <property type="entry name" value="DH_dom"/>
</dbReference>
<dbReference type="InterPro" id="IPR051480">
    <property type="entry name" value="Endocytic_GEF_Adapter"/>
</dbReference>
<dbReference type="InterPro" id="IPR001331">
    <property type="entry name" value="GDS_CDC24_CS"/>
</dbReference>
<dbReference type="InterPro" id="IPR011993">
    <property type="entry name" value="PH-like_dom_sf"/>
</dbReference>
<dbReference type="InterPro" id="IPR001849">
    <property type="entry name" value="PH_domain"/>
</dbReference>
<dbReference type="InterPro" id="IPR044129">
    <property type="entry name" value="PH_RhoGEF3_XPLN"/>
</dbReference>
<dbReference type="InterPro" id="IPR055251">
    <property type="entry name" value="SOS1_NGEF_PH"/>
</dbReference>
<dbReference type="PANTHER" id="PTHR46006:SF2">
    <property type="entry name" value="RHO GUANINE NUCLEOTIDE EXCHANGE FACTOR 3"/>
    <property type="match status" value="1"/>
</dbReference>
<dbReference type="PANTHER" id="PTHR46006">
    <property type="entry name" value="RHO GUANINE NUCLEOTIDE EXCHANGE FACTOR AT 64C, ISOFORM A"/>
    <property type="match status" value="1"/>
</dbReference>
<dbReference type="Pfam" id="PF00621">
    <property type="entry name" value="RhoGEF"/>
    <property type="match status" value="1"/>
</dbReference>
<dbReference type="Pfam" id="PF22697">
    <property type="entry name" value="SOS1_NGEF_PH"/>
    <property type="match status" value="1"/>
</dbReference>
<dbReference type="SMART" id="SM00233">
    <property type="entry name" value="PH"/>
    <property type="match status" value="1"/>
</dbReference>
<dbReference type="SMART" id="SM00325">
    <property type="entry name" value="RhoGEF"/>
    <property type="match status" value="1"/>
</dbReference>
<dbReference type="SUPFAM" id="SSF48065">
    <property type="entry name" value="DBL homology domain (DH-domain)"/>
    <property type="match status" value="1"/>
</dbReference>
<dbReference type="SUPFAM" id="SSF50729">
    <property type="entry name" value="PH domain-like"/>
    <property type="match status" value="1"/>
</dbReference>
<dbReference type="PROSITE" id="PS00741">
    <property type="entry name" value="DH_1"/>
    <property type="match status" value="1"/>
</dbReference>
<dbReference type="PROSITE" id="PS50010">
    <property type="entry name" value="DH_2"/>
    <property type="match status" value="1"/>
</dbReference>
<dbReference type="PROSITE" id="PS50003">
    <property type="entry name" value="PH_DOMAIN"/>
    <property type="match status" value="1"/>
</dbReference>
<name>ARHG3_MACFA</name>
<proteinExistence type="evidence at transcript level"/>
<organism>
    <name type="scientific">Macaca fascicularis</name>
    <name type="common">Crab-eating macaque</name>
    <name type="synonym">Cynomolgus monkey</name>
    <dbReference type="NCBI Taxonomy" id="9541"/>
    <lineage>
        <taxon>Eukaryota</taxon>
        <taxon>Metazoa</taxon>
        <taxon>Chordata</taxon>
        <taxon>Craniata</taxon>
        <taxon>Vertebrata</taxon>
        <taxon>Euteleostomi</taxon>
        <taxon>Mammalia</taxon>
        <taxon>Eutheria</taxon>
        <taxon>Euarchontoglires</taxon>
        <taxon>Primates</taxon>
        <taxon>Haplorrhini</taxon>
        <taxon>Catarrhini</taxon>
        <taxon>Cercopithecidae</taxon>
        <taxon>Cercopithecinae</taxon>
        <taxon>Macaca</taxon>
    </lineage>
</organism>
<feature type="chain" id="PRO_0000080912" description="Rho guanine nucleotide exchange factor 3">
    <location>
        <begin position="1"/>
        <end position="526"/>
    </location>
</feature>
<feature type="domain" description="DH" evidence="4">
    <location>
        <begin position="122"/>
        <end position="304"/>
    </location>
</feature>
<feature type="domain" description="PH" evidence="5">
    <location>
        <begin position="291"/>
        <end position="449"/>
    </location>
</feature>
<feature type="region of interest" description="Disordered" evidence="6">
    <location>
        <begin position="20"/>
        <end position="40"/>
    </location>
</feature>
<feature type="region of interest" description="Disordered" evidence="6">
    <location>
        <begin position="464"/>
        <end position="502"/>
    </location>
</feature>
<feature type="region of interest" description="Disordered" evidence="6">
    <location>
        <begin position="507"/>
        <end position="526"/>
    </location>
</feature>
<feature type="compositionally biased region" description="Polar residues" evidence="6">
    <location>
        <begin position="466"/>
        <end position="475"/>
    </location>
</feature>
<feature type="modified residue" description="Phosphoserine" evidence="3">
    <location>
        <position position="47"/>
    </location>
</feature>
<feature type="modified residue" description="Phosphoserine" evidence="2">
    <location>
        <position position="70"/>
    </location>
</feature>
<gene>
    <name type="primary">ARHGEF3</name>
    <name type="ORF">QccE-16434</name>
</gene>
<accession>Q9N0A8</accession>